<evidence type="ECO:0000255" key="1">
    <source>
        <dbReference type="HAMAP-Rule" id="MF_01844"/>
    </source>
</evidence>
<evidence type="ECO:0000256" key="2">
    <source>
        <dbReference type="SAM" id="MobiDB-lite"/>
    </source>
</evidence>
<comment type="function">
    <text evidence="1">Na(+)/H(+) antiporter that extrudes sodium in exchange for external protons.</text>
</comment>
<comment type="catalytic activity">
    <reaction evidence="1">
        <text>Na(+)(in) + 2 H(+)(out) = Na(+)(out) + 2 H(+)(in)</text>
        <dbReference type="Rhea" id="RHEA:29251"/>
        <dbReference type="ChEBI" id="CHEBI:15378"/>
        <dbReference type="ChEBI" id="CHEBI:29101"/>
    </reaction>
    <physiologicalReaction direction="left-to-right" evidence="1">
        <dbReference type="Rhea" id="RHEA:29252"/>
    </physiologicalReaction>
</comment>
<comment type="subcellular location">
    <subcellularLocation>
        <location evidence="1">Cell membrane</location>
        <topology evidence="1">Multi-pass membrane protein</topology>
    </subcellularLocation>
</comment>
<comment type="similarity">
    <text evidence="1">Belongs to the NhaA Na(+)/H(+) (TC 2.A.33) antiporter family.</text>
</comment>
<accession>A0JR38</accession>
<feature type="chain" id="PRO_0000334229" description="Na(+)/H(+) antiporter NhaA">
    <location>
        <begin position="1"/>
        <end position="461"/>
    </location>
</feature>
<feature type="transmembrane region" description="Helical" evidence="1">
    <location>
        <begin position="48"/>
        <end position="68"/>
    </location>
</feature>
<feature type="transmembrane region" description="Helical" evidence="1">
    <location>
        <begin position="89"/>
        <end position="109"/>
    </location>
</feature>
<feature type="transmembrane region" description="Helical" evidence="1">
    <location>
        <begin position="127"/>
        <end position="147"/>
    </location>
</feature>
<feature type="transmembrane region" description="Helical" evidence="1">
    <location>
        <begin position="157"/>
        <end position="177"/>
    </location>
</feature>
<feature type="transmembrane region" description="Helical" evidence="1">
    <location>
        <begin position="186"/>
        <end position="206"/>
    </location>
</feature>
<feature type="transmembrane region" description="Helical" evidence="1">
    <location>
        <begin position="211"/>
        <end position="231"/>
    </location>
</feature>
<feature type="transmembrane region" description="Helical" evidence="1">
    <location>
        <begin position="236"/>
        <end position="256"/>
    </location>
</feature>
<feature type="transmembrane region" description="Helical" evidence="1">
    <location>
        <begin position="257"/>
        <end position="277"/>
    </location>
</feature>
<feature type="transmembrane region" description="Helical" evidence="1">
    <location>
        <begin position="305"/>
        <end position="325"/>
    </location>
</feature>
<feature type="transmembrane region" description="Helical" evidence="1">
    <location>
        <begin position="339"/>
        <end position="359"/>
    </location>
</feature>
<feature type="transmembrane region" description="Helical" evidence="1">
    <location>
        <begin position="374"/>
        <end position="394"/>
    </location>
</feature>
<feature type="transmembrane region" description="Helical" evidence="1">
    <location>
        <begin position="408"/>
        <end position="428"/>
    </location>
</feature>
<feature type="region of interest" description="Disordered" evidence="2">
    <location>
        <begin position="1"/>
        <end position="23"/>
    </location>
</feature>
<gene>
    <name evidence="1" type="primary">nhaA</name>
    <name type="ordered locus">Arth_0107</name>
</gene>
<sequence>MILSTQRLGRFMSPAPTPAPDAKPRTVLGYGSYAESLRIGEILRKETVGGALLVAAAVIALIWANSPVSDSYFALRDYKIGYEPWHLELSLGAWAADGLLAIFFFLVGLELKREFVAGDLRQLNKSIVPVAAAAGGVLVPALIYAAVNIYSPETLRGWAIPTATDIAFAVAVLAIIGSHLPSALRIFLLTLAVVDDLIAISIIAFFYSSDIQAAPLLLALIPLALYAFLAQRYRRFFGAHFMAAWAILLPLGIVTWALVHASGIHATVAGVLLGFAVPVLRSKASGGPEAGPGLAEIFEHRFRPISAGVAVPIFAFFSAGVAVGGWEGLGSALADPVAIGIIMALVLGKPIGIMGTTWILTKATRARLDGSFKWIDVFGVSLLAGIGFTVSLLVAELSFGHGSLHDDHAKVGILAASLLAAILATVVLRARNRQYRRAEELEKVDSDQDGIPDVYQHESRG</sequence>
<protein>
    <recommendedName>
        <fullName evidence="1">Na(+)/H(+) antiporter NhaA</fullName>
    </recommendedName>
    <alternativeName>
        <fullName evidence="1">Sodium/proton antiporter NhaA</fullName>
    </alternativeName>
</protein>
<organism>
    <name type="scientific">Arthrobacter sp. (strain FB24)</name>
    <dbReference type="NCBI Taxonomy" id="290399"/>
    <lineage>
        <taxon>Bacteria</taxon>
        <taxon>Bacillati</taxon>
        <taxon>Actinomycetota</taxon>
        <taxon>Actinomycetes</taxon>
        <taxon>Micrococcales</taxon>
        <taxon>Micrococcaceae</taxon>
        <taxon>Arthrobacter</taxon>
    </lineage>
</organism>
<keyword id="KW-0050">Antiport</keyword>
<keyword id="KW-1003">Cell membrane</keyword>
<keyword id="KW-0406">Ion transport</keyword>
<keyword id="KW-0472">Membrane</keyword>
<keyword id="KW-1185">Reference proteome</keyword>
<keyword id="KW-0915">Sodium</keyword>
<keyword id="KW-0739">Sodium transport</keyword>
<keyword id="KW-0812">Transmembrane</keyword>
<keyword id="KW-1133">Transmembrane helix</keyword>
<keyword id="KW-0813">Transport</keyword>
<dbReference type="EMBL" id="CP000454">
    <property type="protein sequence ID" value="ABK01508.1"/>
    <property type="molecule type" value="Genomic_DNA"/>
</dbReference>
<dbReference type="SMR" id="A0JR38"/>
<dbReference type="STRING" id="290399.Arth_0107"/>
<dbReference type="KEGG" id="art:Arth_0107"/>
<dbReference type="eggNOG" id="COG3004">
    <property type="taxonomic scope" value="Bacteria"/>
</dbReference>
<dbReference type="HOGENOM" id="CLU_015803_0_0_11"/>
<dbReference type="Proteomes" id="UP000000754">
    <property type="component" value="Chromosome"/>
</dbReference>
<dbReference type="GO" id="GO:0005886">
    <property type="term" value="C:plasma membrane"/>
    <property type="evidence" value="ECO:0007669"/>
    <property type="project" value="UniProtKB-SubCell"/>
</dbReference>
<dbReference type="GO" id="GO:0015385">
    <property type="term" value="F:sodium:proton antiporter activity"/>
    <property type="evidence" value="ECO:0007669"/>
    <property type="project" value="TreeGrafter"/>
</dbReference>
<dbReference type="GO" id="GO:0006885">
    <property type="term" value="P:regulation of pH"/>
    <property type="evidence" value="ECO:0007669"/>
    <property type="project" value="InterPro"/>
</dbReference>
<dbReference type="Gene3D" id="1.20.1530.10">
    <property type="entry name" value="Na+/H+ antiporter like domain"/>
    <property type="match status" value="1"/>
</dbReference>
<dbReference type="HAMAP" id="MF_01844">
    <property type="entry name" value="NhaA"/>
    <property type="match status" value="1"/>
</dbReference>
<dbReference type="InterPro" id="IPR023171">
    <property type="entry name" value="Na/H_antiporter_dom_sf"/>
</dbReference>
<dbReference type="InterPro" id="IPR004670">
    <property type="entry name" value="NhaA"/>
</dbReference>
<dbReference type="NCBIfam" id="TIGR00773">
    <property type="entry name" value="NhaA"/>
    <property type="match status" value="1"/>
</dbReference>
<dbReference type="PANTHER" id="PTHR30341:SF0">
    <property type="entry name" value="NA(+)_H(+) ANTIPORTER NHAA"/>
    <property type="match status" value="1"/>
</dbReference>
<dbReference type="PANTHER" id="PTHR30341">
    <property type="entry name" value="SODIUM ION/PROTON ANTIPORTER NHAA-RELATED"/>
    <property type="match status" value="1"/>
</dbReference>
<dbReference type="Pfam" id="PF06965">
    <property type="entry name" value="Na_H_antiport_1"/>
    <property type="match status" value="1"/>
</dbReference>
<reference key="1">
    <citation type="journal article" date="2013" name="Stand. Genomic Sci.">
        <title>Complete genome sequence of Arthrobacter sp. strain FB24.</title>
        <authorList>
            <person name="Nakatsu C.H."/>
            <person name="Barabote R."/>
            <person name="Thompson S."/>
            <person name="Bruce D."/>
            <person name="Detter C."/>
            <person name="Brettin T."/>
            <person name="Han C."/>
            <person name="Beasley F."/>
            <person name="Chen W."/>
            <person name="Konopka A."/>
            <person name="Xie G."/>
        </authorList>
    </citation>
    <scope>NUCLEOTIDE SEQUENCE [LARGE SCALE GENOMIC DNA]</scope>
    <source>
        <strain>FB24</strain>
    </source>
</reference>
<proteinExistence type="inferred from homology"/>
<name>NHAA_ARTS2</name>